<gene>
    <name evidence="1" type="primary">caiE</name>
    <name type="ordered locus">SF0032</name>
    <name type="ordered locus">S0034</name>
</gene>
<feature type="chain" id="PRO_0000068727" description="Carnitine operon protein CaiE">
    <location>
        <begin position="1"/>
        <end position="196"/>
    </location>
</feature>
<feature type="region of interest" description="Disordered" evidence="2">
    <location>
        <begin position="173"/>
        <end position="196"/>
    </location>
</feature>
<feature type="compositionally biased region" description="Polar residues" evidence="2">
    <location>
        <begin position="187"/>
        <end position="196"/>
    </location>
</feature>
<protein>
    <recommendedName>
        <fullName evidence="1">Carnitine operon protein CaiE</fullName>
    </recommendedName>
</protein>
<accession>Q83SQ8</accession>
<accession>Q7C3C1</accession>
<proteinExistence type="inferred from homology"/>
<dbReference type="EMBL" id="AE005674">
    <property type="protein sequence ID" value="AAN41698.1"/>
    <property type="status" value="ALT_INIT"/>
    <property type="molecule type" value="Genomic_DNA"/>
</dbReference>
<dbReference type="EMBL" id="AE014073">
    <property type="protein sequence ID" value="AAP15579.1"/>
    <property type="status" value="ALT_INIT"/>
    <property type="molecule type" value="Genomic_DNA"/>
</dbReference>
<dbReference type="RefSeq" id="NP_705991.1">
    <property type="nucleotide sequence ID" value="NC_004337.2"/>
</dbReference>
<dbReference type="RefSeq" id="WP_000122884.1">
    <property type="nucleotide sequence ID" value="NZ_WPGW01000005.1"/>
</dbReference>
<dbReference type="SMR" id="Q83SQ8"/>
<dbReference type="STRING" id="198214.SF0032"/>
<dbReference type="PaxDb" id="198214-SF0032"/>
<dbReference type="GeneID" id="1024558"/>
<dbReference type="KEGG" id="sfl:SF0032"/>
<dbReference type="KEGG" id="sfx:S0034"/>
<dbReference type="PATRIC" id="fig|198214.7.peg.38"/>
<dbReference type="HOGENOM" id="CLU_064827_4_2_6"/>
<dbReference type="UniPathway" id="UPA00117"/>
<dbReference type="Proteomes" id="UP000001006">
    <property type="component" value="Chromosome"/>
</dbReference>
<dbReference type="Proteomes" id="UP000002673">
    <property type="component" value="Chromosome"/>
</dbReference>
<dbReference type="GO" id="GO:0016740">
    <property type="term" value="F:transferase activity"/>
    <property type="evidence" value="ECO:0007669"/>
    <property type="project" value="UniProtKB-KW"/>
</dbReference>
<dbReference type="GO" id="GO:0009437">
    <property type="term" value="P:carnitine metabolic process"/>
    <property type="evidence" value="ECO:0007669"/>
    <property type="project" value="UniProtKB-UniRule"/>
</dbReference>
<dbReference type="CDD" id="cd04745">
    <property type="entry name" value="LbH_paaY_like"/>
    <property type="match status" value="1"/>
</dbReference>
<dbReference type="FunFam" id="2.160.10.10:FF:000012">
    <property type="entry name" value="Carnitine operon protein CaiE"/>
    <property type="match status" value="1"/>
</dbReference>
<dbReference type="Gene3D" id="2.160.10.10">
    <property type="entry name" value="Hexapeptide repeat proteins"/>
    <property type="match status" value="1"/>
</dbReference>
<dbReference type="HAMAP" id="MF_01525">
    <property type="entry name" value="CaiE"/>
    <property type="match status" value="1"/>
</dbReference>
<dbReference type="InterPro" id="IPR023446">
    <property type="entry name" value="CaiE"/>
</dbReference>
<dbReference type="InterPro" id="IPR001451">
    <property type="entry name" value="Hexapep"/>
</dbReference>
<dbReference type="InterPro" id="IPR050484">
    <property type="entry name" value="Transf_Hexapept/Carb_Anhydrase"/>
</dbReference>
<dbReference type="InterPro" id="IPR011004">
    <property type="entry name" value="Trimer_LpxA-like_sf"/>
</dbReference>
<dbReference type="NCBIfam" id="NF010150">
    <property type="entry name" value="PRK13627.1"/>
    <property type="match status" value="1"/>
</dbReference>
<dbReference type="PANTHER" id="PTHR13061">
    <property type="entry name" value="DYNACTIN SUBUNIT P25"/>
    <property type="match status" value="1"/>
</dbReference>
<dbReference type="PANTHER" id="PTHR13061:SF29">
    <property type="entry name" value="GAMMA CARBONIC ANHYDRASE-LIKE 1, MITOCHONDRIAL-RELATED"/>
    <property type="match status" value="1"/>
</dbReference>
<dbReference type="Pfam" id="PF00132">
    <property type="entry name" value="Hexapep"/>
    <property type="match status" value="1"/>
</dbReference>
<dbReference type="SUPFAM" id="SSF51161">
    <property type="entry name" value="Trimeric LpxA-like enzymes"/>
    <property type="match status" value="1"/>
</dbReference>
<reference key="1">
    <citation type="journal article" date="2002" name="Nucleic Acids Res.">
        <title>Genome sequence of Shigella flexneri 2a: insights into pathogenicity through comparison with genomes of Escherichia coli K12 and O157.</title>
        <authorList>
            <person name="Jin Q."/>
            <person name="Yuan Z."/>
            <person name="Xu J."/>
            <person name="Wang Y."/>
            <person name="Shen Y."/>
            <person name="Lu W."/>
            <person name="Wang J."/>
            <person name="Liu H."/>
            <person name="Yang J."/>
            <person name="Yang F."/>
            <person name="Zhang X."/>
            <person name="Zhang J."/>
            <person name="Yang G."/>
            <person name="Wu H."/>
            <person name="Qu D."/>
            <person name="Dong J."/>
            <person name="Sun L."/>
            <person name="Xue Y."/>
            <person name="Zhao A."/>
            <person name="Gao Y."/>
            <person name="Zhu J."/>
            <person name="Kan B."/>
            <person name="Ding K."/>
            <person name="Chen S."/>
            <person name="Cheng H."/>
            <person name="Yao Z."/>
            <person name="He B."/>
            <person name="Chen R."/>
            <person name="Ma D."/>
            <person name="Qiang B."/>
            <person name="Wen Y."/>
            <person name="Hou Y."/>
            <person name="Yu J."/>
        </authorList>
    </citation>
    <scope>NUCLEOTIDE SEQUENCE [LARGE SCALE GENOMIC DNA]</scope>
    <source>
        <strain>301 / Serotype 2a</strain>
    </source>
</reference>
<reference key="2">
    <citation type="journal article" date="2003" name="Infect. Immun.">
        <title>Complete genome sequence and comparative genomics of Shigella flexneri serotype 2a strain 2457T.</title>
        <authorList>
            <person name="Wei J."/>
            <person name="Goldberg M.B."/>
            <person name="Burland V."/>
            <person name="Venkatesan M.M."/>
            <person name="Deng W."/>
            <person name="Fournier G."/>
            <person name="Mayhew G.F."/>
            <person name="Plunkett G. III"/>
            <person name="Rose D.J."/>
            <person name="Darling A."/>
            <person name="Mau B."/>
            <person name="Perna N.T."/>
            <person name="Payne S.M."/>
            <person name="Runyen-Janecky L.J."/>
            <person name="Zhou S."/>
            <person name="Schwartz D.C."/>
            <person name="Blattner F.R."/>
        </authorList>
    </citation>
    <scope>NUCLEOTIDE SEQUENCE [LARGE SCALE GENOMIC DNA]</scope>
    <source>
        <strain>ATCC 700930 / 2457T / Serotype 2a</strain>
    </source>
</reference>
<comment type="function">
    <text evidence="1">Overproduction of CaiE stimulates the activity of CaiB and CaiD.</text>
</comment>
<comment type="pathway">
    <text evidence="1">Amine and polyamine metabolism; carnitine metabolism.</text>
</comment>
<comment type="similarity">
    <text evidence="1">Belongs to the transferase hexapeptide repeat family.</text>
</comment>
<comment type="sequence caution" evidence="3">
    <conflict type="erroneous initiation">
        <sequence resource="EMBL-CDS" id="AAN41698"/>
    </conflict>
</comment>
<comment type="sequence caution" evidence="3">
    <conflict type="erroneous initiation">
        <sequence resource="EMBL-CDS" id="AAP15579"/>
    </conflict>
</comment>
<evidence type="ECO:0000255" key="1">
    <source>
        <dbReference type="HAMAP-Rule" id="MF_01525"/>
    </source>
</evidence>
<evidence type="ECO:0000256" key="2">
    <source>
        <dbReference type="SAM" id="MobiDB-lite"/>
    </source>
</evidence>
<evidence type="ECO:0000305" key="3"/>
<name>CAIE_SHIFL</name>
<sequence>MSYYAFEGLIPVVHPTAFVHPSAVLIGDVIVGAGVYIGPLASLRGDYGRLIVQAGANIQDGCIMHGYCDTDTIVGENGHIGHGAILHGCVIGRDALVGMNSVIMDGAVIGEESIVAAMSFVKAGFSGEKRQLLMGTPARAVRSVSDDELHWKRLNTKEYQDLVGRCHASLHETQPLRQMEENRPRLQGTTDVTPKR</sequence>
<organism>
    <name type="scientific">Shigella flexneri</name>
    <dbReference type="NCBI Taxonomy" id="623"/>
    <lineage>
        <taxon>Bacteria</taxon>
        <taxon>Pseudomonadati</taxon>
        <taxon>Pseudomonadota</taxon>
        <taxon>Gammaproteobacteria</taxon>
        <taxon>Enterobacterales</taxon>
        <taxon>Enterobacteriaceae</taxon>
        <taxon>Shigella</taxon>
    </lineage>
</organism>
<keyword id="KW-1185">Reference proteome</keyword>
<keyword id="KW-0677">Repeat</keyword>
<keyword id="KW-0808">Transferase</keyword>